<organism>
    <name type="scientific">African swine fever virus (isolate Tick/South Africa/Pretoriuskop Pr4/1996)</name>
    <name type="common">ASFV</name>
    <dbReference type="NCBI Taxonomy" id="561443"/>
    <lineage>
        <taxon>Viruses</taxon>
        <taxon>Varidnaviria</taxon>
        <taxon>Bamfordvirae</taxon>
        <taxon>Nucleocytoviricota</taxon>
        <taxon>Pokkesviricetes</taxon>
        <taxon>Asfuvirales</taxon>
        <taxon>Asfarviridae</taxon>
        <taxon>Asfivirus</taxon>
        <taxon>African swine fever virus</taxon>
    </lineage>
</organism>
<accession>P0C9X9</accession>
<dbReference type="EMBL" id="AY261363">
    <property type="status" value="NOT_ANNOTATED_CDS"/>
    <property type="molecule type" value="Genomic_DNA"/>
</dbReference>
<dbReference type="SMR" id="P0C9X9"/>
<dbReference type="Proteomes" id="UP000000859">
    <property type="component" value="Segment"/>
</dbReference>
<dbReference type="GO" id="GO:0044423">
    <property type="term" value="C:virion component"/>
    <property type="evidence" value="ECO:0007669"/>
    <property type="project" value="UniProtKB-KW"/>
</dbReference>
<dbReference type="GO" id="GO:0003677">
    <property type="term" value="F:DNA binding"/>
    <property type="evidence" value="ECO:0007669"/>
    <property type="project" value="UniProtKB-KW"/>
</dbReference>
<keyword id="KW-0238">DNA-binding</keyword>
<keyword id="KW-0426">Late protein</keyword>
<keyword id="KW-0946">Virion</keyword>
<sequence>MPTKAGTKSTANKKTTKGSSKSGSPRGHTGKTHAPPSMHSGMLYKDMVNIARSKGIPIYQNGTRLTKSELEKKIRRSK</sequence>
<reference key="1">
    <citation type="submission" date="2003-03" db="EMBL/GenBank/DDBJ databases">
        <title>African swine fever virus genomes.</title>
        <authorList>
            <person name="Kutish G.F."/>
            <person name="Rock D.L."/>
        </authorList>
    </citation>
    <scope>NUCLEOTIDE SEQUENCE [LARGE SCALE GENOMIC DNA]</scope>
</reference>
<comment type="function">
    <text evidence="1">May play a role in genome packaging through direct interaction with viral DNA. Binds to ssDNA and dsDNA with the same apparent affinity in vitro.</text>
</comment>
<comment type="subcellular location">
    <subcellularLocation>
        <location evidence="1">Virion</location>
    </subcellularLocation>
    <text evidence="1">Found in association with the viral nucleoid.</text>
</comment>
<comment type="induction">
    <text evidence="1">Expressed in the early phase of the viral replicative cycle.</text>
</comment>
<comment type="similarity">
    <text evidence="3">Belongs to the asfivirus P10 family.</text>
</comment>
<name>P10_ASFP4</name>
<organismHost>
    <name type="scientific">Ornithodoros</name>
    <name type="common">relapsing fever ticks</name>
    <dbReference type="NCBI Taxonomy" id="6937"/>
</organismHost>
<organismHost>
    <name type="scientific">Phacochoerus aethiopicus</name>
    <name type="common">Warthog</name>
    <dbReference type="NCBI Taxonomy" id="85517"/>
</organismHost>
<organismHost>
    <name type="scientific">Phacochoerus africanus</name>
    <name type="common">Warthog</name>
    <dbReference type="NCBI Taxonomy" id="41426"/>
</organismHost>
<organismHost>
    <name type="scientific">Potamochoerus larvatus</name>
    <name type="common">Bushpig</name>
    <dbReference type="NCBI Taxonomy" id="273792"/>
</organismHost>
<organismHost>
    <name type="scientific">Sus scrofa</name>
    <name type="common">Pig</name>
    <dbReference type="NCBI Taxonomy" id="9823"/>
</organismHost>
<protein>
    <recommendedName>
        <fullName>Structural DNA-binding protein p10</fullName>
        <shortName>p10</shortName>
    </recommendedName>
</protein>
<evidence type="ECO:0000250" key="1">
    <source>
        <dbReference type="UniProtKB" id="Q89769"/>
    </source>
</evidence>
<evidence type="ECO:0000256" key="2">
    <source>
        <dbReference type="SAM" id="MobiDB-lite"/>
    </source>
</evidence>
<evidence type="ECO:0000305" key="3"/>
<feature type="initiator methionine" description="Removed" evidence="1">
    <location>
        <position position="1"/>
    </location>
</feature>
<feature type="chain" id="PRO_0000373390" description="Structural DNA-binding protein p10">
    <location>
        <begin position="2"/>
        <end position="78"/>
    </location>
</feature>
<feature type="region of interest" description="Disordered" evidence="2">
    <location>
        <begin position="1"/>
        <end position="41"/>
    </location>
</feature>
<feature type="compositionally biased region" description="Low complexity" evidence="2">
    <location>
        <begin position="1"/>
        <end position="24"/>
    </location>
</feature>
<gene>
    <name type="ordered locus">Pret-061</name>
</gene>
<proteinExistence type="inferred from homology"/>